<comment type="function">
    <text evidence="1">Converts heme B (protoheme IX) to heme O by substitution of the vinyl group on carbon 2 of heme B porphyrin ring with a hydroxyethyl farnesyl side group.</text>
</comment>
<comment type="catalytic activity">
    <reaction evidence="1">
        <text>heme b + (2E,6E)-farnesyl diphosphate + H2O = Fe(II)-heme o + diphosphate</text>
        <dbReference type="Rhea" id="RHEA:28070"/>
        <dbReference type="ChEBI" id="CHEBI:15377"/>
        <dbReference type="ChEBI" id="CHEBI:33019"/>
        <dbReference type="ChEBI" id="CHEBI:60344"/>
        <dbReference type="ChEBI" id="CHEBI:60530"/>
        <dbReference type="ChEBI" id="CHEBI:175763"/>
        <dbReference type="EC" id="2.5.1.141"/>
    </reaction>
</comment>
<comment type="pathway">
    <text evidence="1">Porphyrin-containing compound metabolism; heme O biosynthesis; heme O from protoheme: step 1/1.</text>
</comment>
<comment type="subcellular location">
    <subcellularLocation>
        <location evidence="1">Cell inner membrane</location>
        <topology evidence="1">Multi-pass membrane protein</topology>
    </subcellularLocation>
</comment>
<comment type="miscellaneous">
    <text evidence="1">Carbon 2 of the heme B porphyrin ring is defined according to the Fischer nomenclature.</text>
</comment>
<comment type="similarity">
    <text evidence="1">Belongs to the UbiA prenyltransferase family. Protoheme IX farnesyltransferase subfamily.</text>
</comment>
<comment type="sequence caution" evidence="2">
    <conflict type="erroneous initiation">
        <sequence resource="EMBL-CDS" id="ABI63155"/>
    </conflict>
</comment>
<gene>
    <name evidence="1" type="primary">ctaB</name>
    <name type="ordered locus">GbCGDNIH1_2257</name>
</gene>
<protein>
    <recommendedName>
        <fullName evidence="1">Protoheme IX farnesyltransferase</fullName>
        <ecNumber evidence="1">2.5.1.141</ecNumber>
    </recommendedName>
    <alternativeName>
        <fullName evidence="1">Heme B farnesyltransferase</fullName>
    </alternativeName>
    <alternativeName>
        <fullName evidence="1">Heme O synthase</fullName>
    </alternativeName>
</protein>
<dbReference type="EC" id="2.5.1.141" evidence="1"/>
<dbReference type="EMBL" id="CP000394">
    <property type="protein sequence ID" value="ABI63155.1"/>
    <property type="status" value="ALT_INIT"/>
    <property type="molecule type" value="Genomic_DNA"/>
</dbReference>
<dbReference type="RefSeq" id="WP_025318400.1">
    <property type="nucleotide sequence ID" value="NC_008343.2"/>
</dbReference>
<dbReference type="SMR" id="Q0BPU7"/>
<dbReference type="STRING" id="391165.GbCGDNIH1_2257"/>
<dbReference type="KEGG" id="gbe:GbCGDNIH1_2257"/>
<dbReference type="eggNOG" id="COG0109">
    <property type="taxonomic scope" value="Bacteria"/>
</dbReference>
<dbReference type="HOGENOM" id="CLU_029631_0_2_5"/>
<dbReference type="OrthoDB" id="9814417at2"/>
<dbReference type="UniPathway" id="UPA00834">
    <property type="reaction ID" value="UER00712"/>
</dbReference>
<dbReference type="Proteomes" id="UP000001963">
    <property type="component" value="Chromosome"/>
</dbReference>
<dbReference type="GO" id="GO:0005886">
    <property type="term" value="C:plasma membrane"/>
    <property type="evidence" value="ECO:0007669"/>
    <property type="project" value="UniProtKB-SubCell"/>
</dbReference>
<dbReference type="GO" id="GO:0008495">
    <property type="term" value="F:protoheme IX farnesyltransferase activity"/>
    <property type="evidence" value="ECO:0007669"/>
    <property type="project" value="UniProtKB-UniRule"/>
</dbReference>
<dbReference type="GO" id="GO:0048034">
    <property type="term" value="P:heme O biosynthetic process"/>
    <property type="evidence" value="ECO:0007669"/>
    <property type="project" value="UniProtKB-UniRule"/>
</dbReference>
<dbReference type="CDD" id="cd13957">
    <property type="entry name" value="PT_UbiA_Cox10"/>
    <property type="match status" value="1"/>
</dbReference>
<dbReference type="Gene3D" id="1.10.357.140">
    <property type="entry name" value="UbiA prenyltransferase"/>
    <property type="match status" value="1"/>
</dbReference>
<dbReference type="HAMAP" id="MF_00154">
    <property type="entry name" value="CyoE_CtaB"/>
    <property type="match status" value="1"/>
</dbReference>
<dbReference type="InterPro" id="IPR006369">
    <property type="entry name" value="Protohaem_IX_farnesylTrfase"/>
</dbReference>
<dbReference type="InterPro" id="IPR000537">
    <property type="entry name" value="UbiA_prenyltransferase"/>
</dbReference>
<dbReference type="InterPro" id="IPR030470">
    <property type="entry name" value="UbiA_prenylTrfase_CS"/>
</dbReference>
<dbReference type="InterPro" id="IPR044878">
    <property type="entry name" value="UbiA_sf"/>
</dbReference>
<dbReference type="NCBIfam" id="TIGR01473">
    <property type="entry name" value="cyoE_ctaB"/>
    <property type="match status" value="1"/>
</dbReference>
<dbReference type="NCBIfam" id="NF003349">
    <property type="entry name" value="PRK04375.1-2"/>
    <property type="match status" value="1"/>
</dbReference>
<dbReference type="PANTHER" id="PTHR43448:SF7">
    <property type="entry name" value="4-HYDROXYBENZOATE SOLANESYLTRANSFERASE"/>
    <property type="match status" value="1"/>
</dbReference>
<dbReference type="PANTHER" id="PTHR43448">
    <property type="entry name" value="PROTOHEME IX FARNESYLTRANSFERASE, MITOCHONDRIAL"/>
    <property type="match status" value="1"/>
</dbReference>
<dbReference type="Pfam" id="PF01040">
    <property type="entry name" value="UbiA"/>
    <property type="match status" value="1"/>
</dbReference>
<dbReference type="PROSITE" id="PS00943">
    <property type="entry name" value="UBIA"/>
    <property type="match status" value="1"/>
</dbReference>
<keyword id="KW-0997">Cell inner membrane</keyword>
<keyword id="KW-1003">Cell membrane</keyword>
<keyword id="KW-0350">Heme biosynthesis</keyword>
<keyword id="KW-0472">Membrane</keyword>
<keyword id="KW-1185">Reference proteome</keyword>
<keyword id="KW-0808">Transferase</keyword>
<keyword id="KW-0812">Transmembrane</keyword>
<keyword id="KW-1133">Transmembrane helix</keyword>
<evidence type="ECO:0000255" key="1">
    <source>
        <dbReference type="HAMAP-Rule" id="MF_00154"/>
    </source>
</evidence>
<evidence type="ECO:0000305" key="2"/>
<name>COXX_GRABC</name>
<organism>
    <name type="scientific">Granulibacter bethesdensis (strain ATCC BAA-1260 / CGDNIH1)</name>
    <dbReference type="NCBI Taxonomy" id="391165"/>
    <lineage>
        <taxon>Bacteria</taxon>
        <taxon>Pseudomonadati</taxon>
        <taxon>Pseudomonadota</taxon>
        <taxon>Alphaproteobacteria</taxon>
        <taxon>Acetobacterales</taxon>
        <taxon>Acetobacteraceae</taxon>
        <taxon>Granulibacter</taxon>
    </lineage>
</organism>
<reference key="1">
    <citation type="journal article" date="2007" name="J. Bacteriol.">
        <title>Genome sequence analysis of the emerging human pathogenic acetic acid bacterium Granulibacter bethesdensis.</title>
        <authorList>
            <person name="Greenberg D.E."/>
            <person name="Porcella S.F."/>
            <person name="Zelazny A.M."/>
            <person name="Virtaneva K."/>
            <person name="Sturdevant D.E."/>
            <person name="Kupko J.J. III"/>
            <person name="Barbian K.D."/>
            <person name="Babar A."/>
            <person name="Dorward D.W."/>
            <person name="Holland S.M."/>
        </authorList>
    </citation>
    <scope>NUCLEOTIDE SEQUENCE [LARGE SCALE GENOMIC DNA]</scope>
    <source>
        <strain>ATCC BAA-1260 / CGDNIH1</strain>
    </source>
</reference>
<feature type="chain" id="PRO_0000327061" description="Protoheme IX farnesyltransferase">
    <location>
        <begin position="1"/>
        <end position="317"/>
    </location>
</feature>
<feature type="transmembrane region" description="Helical" evidence="1">
    <location>
        <begin position="39"/>
        <end position="58"/>
    </location>
</feature>
<feature type="transmembrane region" description="Helical" evidence="1">
    <location>
        <begin position="62"/>
        <end position="84"/>
    </location>
</feature>
<feature type="transmembrane region" description="Helical" evidence="1">
    <location>
        <begin position="100"/>
        <end position="120"/>
    </location>
</feature>
<feature type="transmembrane region" description="Helical" evidence="1">
    <location>
        <begin position="123"/>
        <end position="143"/>
    </location>
</feature>
<feature type="transmembrane region" description="Helical" evidence="1">
    <location>
        <begin position="160"/>
        <end position="180"/>
    </location>
</feature>
<feature type="transmembrane region" description="Helical" evidence="1">
    <location>
        <begin position="184"/>
        <end position="204"/>
    </location>
</feature>
<feature type="transmembrane region" description="Helical" evidence="1">
    <location>
        <begin position="233"/>
        <end position="253"/>
    </location>
</feature>
<feature type="transmembrane region" description="Helical" evidence="1">
    <location>
        <begin position="256"/>
        <end position="276"/>
    </location>
</feature>
<feature type="transmembrane region" description="Helical" evidence="1">
    <location>
        <begin position="293"/>
        <end position="313"/>
    </location>
</feature>
<proteinExistence type="inferred from homology"/>
<sequence>MSDSAFVNGGREVSSLPLSAQMPGMASAADWVTLLKPRVMSLVVFTGLIGMLVAPGSLHPVLGAIAILCIAVATGASGAINMWYDRDIDAVMRRTKNRPIPAGRIEPGEALGYGIVLAVGSVLVMWLATNVVAAAVLAFAIFFYSVIYTMWLKRSTPQNIVIGGAAGAFPPVIGWAAVTGTIDLMPVMMFAIVFFWTPPHFWSLSLWAQMDYERAGVPMLPVVAGARKTRQHIMAYTVLLSVIAVLPWALGDTGRVYGLSAVVLSLGFLVQSWRVLRDKQDEVGLSLTKDAPARAAFKYSLIYLAVLFLALAVDRFV</sequence>
<accession>Q0BPU7</accession>